<reference key="1">
    <citation type="journal article" date="1988" name="Peptides">
        <title>The bag cell egg-laying hormones of Aplysia brasiliana and Aplysia californica are identical.</title>
        <authorList>
            <person name="Nagle G.T."/>
            <person name="Painter S.D."/>
            <person name="Blankenship J.E."/>
            <person name="Choate J.V.A."/>
            <person name="Kurosky A."/>
        </authorList>
    </citation>
    <scope>PROTEIN SEQUENCE</scope>
    <scope>AMIDATION AT LYS-36</scope>
    <source>
        <tissue>Bag cell</tissue>
    </source>
</reference>
<protein>
    <recommendedName>
        <fullName>Egg-laying hormone</fullName>
        <shortName>ELH</shortName>
    </recommendedName>
</protein>
<name>ELH_APLFA</name>
<accession>Q7M427</accession>
<keyword id="KW-0027">Amidation</keyword>
<keyword id="KW-0903">Direct protein sequencing</keyword>
<keyword id="KW-0372">Hormone</keyword>
<keyword id="KW-0527">Neuropeptide</keyword>
<keyword id="KW-0964">Secreted</keyword>
<organism>
    <name type="scientific">Aplysia fasciata</name>
    <name type="common">Mottled sea hare</name>
    <name type="synonym">Aplysia brasiliana</name>
    <dbReference type="NCBI Taxonomy" id="144767"/>
    <lineage>
        <taxon>Eukaryota</taxon>
        <taxon>Metazoa</taxon>
        <taxon>Spiralia</taxon>
        <taxon>Lophotrochozoa</taxon>
        <taxon>Mollusca</taxon>
        <taxon>Gastropoda</taxon>
        <taxon>Heterobranchia</taxon>
        <taxon>Euthyneura</taxon>
        <taxon>Tectipleura</taxon>
        <taxon>Aplysiida</taxon>
        <taxon>Aplysioidea</taxon>
        <taxon>Aplysiidae</taxon>
        <taxon>Aplysia</taxon>
    </lineage>
</organism>
<comment type="function">
    <text>ELH acts as a neurotransmitter locally, upon neurons of the abdominal ganglion and as a hormone by diffusing into the circulating hemolymph and modulating the activity of other organs. It specifically causes contraction of smooth muscle in the ovotestis and expulsion of the egg string.</text>
</comment>
<comment type="subcellular location">
    <subcellularLocation>
        <location>Secreted</location>
    </subcellularLocation>
</comment>
<comment type="tissue specificity">
    <text>Bag cell neurons.</text>
</comment>
<comment type="similarity">
    <text evidence="2">Belongs to the molluscan ELH family.</text>
</comment>
<feature type="peptide" id="PRO_0000044635" description="Egg-laying hormone">
    <location>
        <begin position="1"/>
        <end position="36"/>
    </location>
</feature>
<feature type="modified residue" description="Lysine amide" evidence="1">
    <location>
        <position position="36"/>
    </location>
</feature>
<proteinExistence type="evidence at protein level"/>
<sequence length="36" mass="4385">ISINQDLKAITDMLLTEQIRERQRYLADLRQRLLEK</sequence>
<evidence type="ECO:0000269" key="1">
    <source>
    </source>
</evidence>
<evidence type="ECO:0000305" key="2"/>
<dbReference type="PIR" id="A59064">
    <property type="entry name" value="A59064"/>
</dbReference>
<dbReference type="SMR" id="Q7M427"/>
<dbReference type="GO" id="GO:0005576">
    <property type="term" value="C:extracellular region"/>
    <property type="evidence" value="ECO:0007669"/>
    <property type="project" value="UniProtKB-SubCell"/>
</dbReference>
<dbReference type="GO" id="GO:0005179">
    <property type="term" value="F:hormone activity"/>
    <property type="evidence" value="ECO:0007669"/>
    <property type="project" value="UniProtKB-KW"/>
</dbReference>
<dbReference type="GO" id="GO:0007218">
    <property type="term" value="P:neuropeptide signaling pathway"/>
    <property type="evidence" value="ECO:0007669"/>
    <property type="project" value="UniProtKB-KW"/>
</dbReference>
<dbReference type="InterPro" id="IPR003424">
    <property type="entry name" value="ELH"/>
</dbReference>
<dbReference type="Pfam" id="PF02323">
    <property type="entry name" value="ELH"/>
    <property type="match status" value="1"/>
</dbReference>